<keyword id="KW-0002">3D-structure</keyword>
<keyword id="KW-1185">Reference proteome</keyword>
<organism>
    <name type="scientific">Bacillus subtilis (strain 168)</name>
    <dbReference type="NCBI Taxonomy" id="224308"/>
    <lineage>
        <taxon>Bacteria</taxon>
        <taxon>Bacillati</taxon>
        <taxon>Bacillota</taxon>
        <taxon>Bacilli</taxon>
        <taxon>Bacillales</taxon>
        <taxon>Bacillaceae</taxon>
        <taxon>Bacillus</taxon>
    </lineage>
</organism>
<evidence type="ECO:0000305" key="1"/>
<evidence type="ECO:0007829" key="2">
    <source>
        <dbReference type="PDB" id="2GTA"/>
    </source>
</evidence>
<comment type="subunit">
    <text evidence="1">Homodimer, or homotetramer.</text>
</comment>
<dbReference type="EMBL" id="L38424">
    <property type="protein sequence ID" value="AAA92873.1"/>
    <property type="molecule type" value="Genomic_DNA"/>
</dbReference>
<dbReference type="EMBL" id="L47709">
    <property type="protein sequence ID" value="AAB38441.1"/>
    <property type="molecule type" value="Genomic_DNA"/>
</dbReference>
<dbReference type="EMBL" id="AL009126">
    <property type="protein sequence ID" value="CAB14166.1"/>
    <property type="molecule type" value="Genomic_DNA"/>
</dbReference>
<dbReference type="PIR" id="D69937">
    <property type="entry name" value="D69937"/>
</dbReference>
<dbReference type="RefSeq" id="NP_390131.1">
    <property type="nucleotide sequence ID" value="NC_000964.3"/>
</dbReference>
<dbReference type="RefSeq" id="WP_004398996.1">
    <property type="nucleotide sequence ID" value="NZ_OZ025638.1"/>
</dbReference>
<dbReference type="PDB" id="2GTA">
    <property type="method" value="X-ray"/>
    <property type="resolution" value="2.90 A"/>
    <property type="chains" value="A/B/C/D=1-111"/>
</dbReference>
<dbReference type="PDBsum" id="2GTA"/>
<dbReference type="SMR" id="P42979"/>
<dbReference type="FunCoup" id="P42979">
    <property type="interactions" value="68"/>
</dbReference>
<dbReference type="STRING" id="224308.BSU22500"/>
<dbReference type="PaxDb" id="224308-BSU22500"/>
<dbReference type="EnsemblBacteria" id="CAB14166">
    <property type="protein sequence ID" value="CAB14166"/>
    <property type="gene ID" value="BSU_22500"/>
</dbReference>
<dbReference type="GeneID" id="939022"/>
<dbReference type="KEGG" id="bsu:BSU22500"/>
<dbReference type="PATRIC" id="fig|224308.179.peg.2454"/>
<dbReference type="eggNOG" id="COG1694">
    <property type="taxonomic scope" value="Bacteria"/>
</dbReference>
<dbReference type="InParanoid" id="P42979"/>
<dbReference type="OrthoDB" id="9807397at2"/>
<dbReference type="PhylomeDB" id="P42979"/>
<dbReference type="BioCyc" id="BSUB:BSU22500-MONOMER"/>
<dbReference type="EvolutionaryTrace" id="P42979"/>
<dbReference type="Proteomes" id="UP000001570">
    <property type="component" value="Chromosome"/>
</dbReference>
<dbReference type="CDD" id="cd11531">
    <property type="entry name" value="NTP-PPase_BsYpjD"/>
    <property type="match status" value="1"/>
</dbReference>
<dbReference type="Gene3D" id="1.10.287.1080">
    <property type="entry name" value="MazG-like"/>
    <property type="match status" value="1"/>
</dbReference>
<dbReference type="InterPro" id="IPR004518">
    <property type="entry name" value="MazG-like_dom"/>
</dbReference>
<dbReference type="InterPro" id="IPR012359">
    <property type="entry name" value="MazG-related_YpjD"/>
</dbReference>
<dbReference type="InterPro" id="IPR047046">
    <property type="entry name" value="YpjD/YvdC"/>
</dbReference>
<dbReference type="PANTHER" id="PTHR42692">
    <property type="entry name" value="NUCLEOTIDE PYROPHOSPHOHYDROLASE"/>
    <property type="match status" value="1"/>
</dbReference>
<dbReference type="PANTHER" id="PTHR42692:SF1">
    <property type="entry name" value="NUCLEOTIDE PYROPHOSPHOHYDROLASE"/>
    <property type="match status" value="1"/>
</dbReference>
<dbReference type="Pfam" id="PF03819">
    <property type="entry name" value="MazG"/>
    <property type="match status" value="1"/>
</dbReference>
<dbReference type="PIRSF" id="PIRSF029904">
    <property type="entry name" value="UCP029904_pph"/>
    <property type="match status" value="1"/>
</dbReference>
<dbReference type="SUPFAM" id="SSF101386">
    <property type="entry name" value="all-alpha NTP pyrophosphatases"/>
    <property type="match status" value="1"/>
</dbReference>
<accession>P42979</accession>
<protein>
    <recommendedName>
        <fullName>Uncharacterized protein YpjD</fullName>
    </recommendedName>
</protein>
<gene>
    <name type="primary">ypjD</name>
    <name type="synonym">jojD</name>
    <name type="ordered locus">BSU22500</name>
</gene>
<feature type="chain" id="PRO_0000049704" description="Uncharacterized protein YpjD">
    <location>
        <begin position="1"/>
        <end position="111"/>
    </location>
</feature>
<feature type="helix" evidence="2">
    <location>
        <begin position="6"/>
        <end position="17"/>
    </location>
</feature>
<feature type="strand" evidence="2">
    <location>
        <begin position="20"/>
        <end position="22"/>
    </location>
</feature>
<feature type="helix" evidence="2">
    <location>
        <begin position="27"/>
        <end position="48"/>
    </location>
</feature>
<feature type="strand" evidence="2">
    <location>
        <begin position="50"/>
        <end position="52"/>
    </location>
</feature>
<feature type="helix" evidence="2">
    <location>
        <begin position="62"/>
        <end position="79"/>
    </location>
</feature>
<feature type="turn" evidence="2">
    <location>
        <begin position="80"/>
        <end position="82"/>
    </location>
</feature>
<feature type="helix" evidence="2">
    <location>
        <begin position="85"/>
        <end position="95"/>
    </location>
</feature>
<sequence>MSDKTMKDIQAEVDRYIGQFKEGYFSPLAMMARLTEELGELAREVNHRYGEKPKKATEDDKSMEEEIGDVLFVLVCLANSLDISLEEAHDRVMHKFNTRDKDRWTRKEEGK</sequence>
<proteinExistence type="evidence at protein level"/>
<reference key="1">
    <citation type="journal article" date="1996" name="Microbiology">
        <title>Sequence analysis of the Bacillus subtilis chromosome region between the serA and kdg loci cloned in a yeast artificial chromosome.</title>
        <authorList>
            <person name="Sorokin A.V."/>
            <person name="Azevedo V."/>
            <person name="Zumstein E."/>
            <person name="Galleron N."/>
            <person name="Ehrlich S.D."/>
            <person name="Serror P."/>
        </authorList>
    </citation>
    <scope>NUCLEOTIDE SEQUENCE [GENOMIC DNA]</scope>
    <source>
        <strain>168 / Marburg / ATCC 6051 / DSM 10 / JCM 1465 / NBRC 13719 / NCIMB 3610 / NRRL NRS-744 / VKM B-501</strain>
    </source>
</reference>
<reference key="2">
    <citation type="journal article" date="1997" name="Nature">
        <title>The complete genome sequence of the Gram-positive bacterium Bacillus subtilis.</title>
        <authorList>
            <person name="Kunst F."/>
            <person name="Ogasawara N."/>
            <person name="Moszer I."/>
            <person name="Albertini A.M."/>
            <person name="Alloni G."/>
            <person name="Azevedo V."/>
            <person name="Bertero M.G."/>
            <person name="Bessieres P."/>
            <person name="Bolotin A."/>
            <person name="Borchert S."/>
            <person name="Borriss R."/>
            <person name="Boursier L."/>
            <person name="Brans A."/>
            <person name="Braun M."/>
            <person name="Brignell S.C."/>
            <person name="Bron S."/>
            <person name="Brouillet S."/>
            <person name="Bruschi C.V."/>
            <person name="Caldwell B."/>
            <person name="Capuano V."/>
            <person name="Carter N.M."/>
            <person name="Choi S.-K."/>
            <person name="Codani J.-J."/>
            <person name="Connerton I.F."/>
            <person name="Cummings N.J."/>
            <person name="Daniel R.A."/>
            <person name="Denizot F."/>
            <person name="Devine K.M."/>
            <person name="Duesterhoeft A."/>
            <person name="Ehrlich S.D."/>
            <person name="Emmerson P.T."/>
            <person name="Entian K.-D."/>
            <person name="Errington J."/>
            <person name="Fabret C."/>
            <person name="Ferrari E."/>
            <person name="Foulger D."/>
            <person name="Fritz C."/>
            <person name="Fujita M."/>
            <person name="Fujita Y."/>
            <person name="Fuma S."/>
            <person name="Galizzi A."/>
            <person name="Galleron N."/>
            <person name="Ghim S.-Y."/>
            <person name="Glaser P."/>
            <person name="Goffeau A."/>
            <person name="Golightly E.J."/>
            <person name="Grandi G."/>
            <person name="Guiseppi G."/>
            <person name="Guy B.J."/>
            <person name="Haga K."/>
            <person name="Haiech J."/>
            <person name="Harwood C.R."/>
            <person name="Henaut A."/>
            <person name="Hilbert H."/>
            <person name="Holsappel S."/>
            <person name="Hosono S."/>
            <person name="Hullo M.-F."/>
            <person name="Itaya M."/>
            <person name="Jones L.-M."/>
            <person name="Joris B."/>
            <person name="Karamata D."/>
            <person name="Kasahara Y."/>
            <person name="Klaerr-Blanchard M."/>
            <person name="Klein C."/>
            <person name="Kobayashi Y."/>
            <person name="Koetter P."/>
            <person name="Koningstein G."/>
            <person name="Krogh S."/>
            <person name="Kumano M."/>
            <person name="Kurita K."/>
            <person name="Lapidus A."/>
            <person name="Lardinois S."/>
            <person name="Lauber J."/>
            <person name="Lazarevic V."/>
            <person name="Lee S.-M."/>
            <person name="Levine A."/>
            <person name="Liu H."/>
            <person name="Masuda S."/>
            <person name="Mauel C."/>
            <person name="Medigue C."/>
            <person name="Medina N."/>
            <person name="Mellado R.P."/>
            <person name="Mizuno M."/>
            <person name="Moestl D."/>
            <person name="Nakai S."/>
            <person name="Noback M."/>
            <person name="Noone D."/>
            <person name="O'Reilly M."/>
            <person name="Ogawa K."/>
            <person name="Ogiwara A."/>
            <person name="Oudega B."/>
            <person name="Park S.-H."/>
            <person name="Parro V."/>
            <person name="Pohl T.M."/>
            <person name="Portetelle D."/>
            <person name="Porwollik S."/>
            <person name="Prescott A.M."/>
            <person name="Presecan E."/>
            <person name="Pujic P."/>
            <person name="Purnelle B."/>
            <person name="Rapoport G."/>
            <person name="Rey M."/>
            <person name="Reynolds S."/>
            <person name="Rieger M."/>
            <person name="Rivolta C."/>
            <person name="Rocha E."/>
            <person name="Roche B."/>
            <person name="Rose M."/>
            <person name="Sadaie Y."/>
            <person name="Sato T."/>
            <person name="Scanlan E."/>
            <person name="Schleich S."/>
            <person name="Schroeter R."/>
            <person name="Scoffone F."/>
            <person name="Sekiguchi J."/>
            <person name="Sekowska A."/>
            <person name="Seror S.J."/>
            <person name="Serror P."/>
            <person name="Shin B.-S."/>
            <person name="Soldo B."/>
            <person name="Sorokin A."/>
            <person name="Tacconi E."/>
            <person name="Takagi T."/>
            <person name="Takahashi H."/>
            <person name="Takemaru K."/>
            <person name="Takeuchi M."/>
            <person name="Tamakoshi A."/>
            <person name="Tanaka T."/>
            <person name="Terpstra P."/>
            <person name="Tognoni A."/>
            <person name="Tosato V."/>
            <person name="Uchiyama S."/>
            <person name="Vandenbol M."/>
            <person name="Vannier F."/>
            <person name="Vassarotti A."/>
            <person name="Viari A."/>
            <person name="Wambutt R."/>
            <person name="Wedler E."/>
            <person name="Wedler H."/>
            <person name="Weitzenegger T."/>
            <person name="Winters P."/>
            <person name="Wipat A."/>
            <person name="Yamamoto H."/>
            <person name="Yamane K."/>
            <person name="Yasumoto K."/>
            <person name="Yata K."/>
            <person name="Yoshida K."/>
            <person name="Yoshikawa H.-F."/>
            <person name="Zumstein E."/>
            <person name="Yoshikawa H."/>
            <person name="Danchin A."/>
        </authorList>
    </citation>
    <scope>NUCLEOTIDE SEQUENCE [LARGE SCALE GENOMIC DNA]</scope>
    <source>
        <strain>168</strain>
    </source>
</reference>
<reference key="3">
    <citation type="submission" date="2006-05" db="PDB data bank">
        <title>Crystal structure of the putative pyrophosphatase ypjD from Bacillus subtilis.</title>
        <authorList>
            <consortium name="Northeast structural genomics consortium (NESG)"/>
        </authorList>
    </citation>
    <scope>X-RAY CRYSTALLOGRAPHY (2.9 ANGSTROMS)</scope>
    <scope>SUBUNIT</scope>
</reference>
<name>YPJD_BACSU</name>